<proteinExistence type="evidence at protein level"/>
<gene>
    <name type="primary">Dlg2</name>
    <name type="synonym">Dlgh2</name>
</gene>
<dbReference type="EMBL" id="U49049">
    <property type="protein sequence ID" value="AAB53243.1"/>
    <property type="molecule type" value="mRNA"/>
</dbReference>
<dbReference type="EMBL" id="U50717">
    <property type="protein sequence ID" value="AAC52643.1"/>
    <property type="molecule type" value="mRNA"/>
</dbReference>
<dbReference type="EMBL" id="U53368">
    <property type="protein sequence ID" value="AAB48562.1"/>
    <property type="molecule type" value="mRNA"/>
</dbReference>
<dbReference type="PIR" id="T10811">
    <property type="entry name" value="T10811"/>
</dbReference>
<dbReference type="RefSeq" id="NP_071618.2">
    <molecule id="Q63622-1"/>
    <property type="nucleotide sequence ID" value="NM_022282.2"/>
</dbReference>
<dbReference type="PDB" id="4H11">
    <property type="method" value="X-ray"/>
    <property type="resolution" value="1.67 A"/>
    <property type="chains" value="A/B=93-188"/>
</dbReference>
<dbReference type="PDBsum" id="4H11"/>
<dbReference type="SMR" id="Q63622"/>
<dbReference type="BioGRID" id="248965">
    <property type="interactions" value="12"/>
</dbReference>
<dbReference type="CORUM" id="Q63622"/>
<dbReference type="FunCoup" id="Q63622">
    <property type="interactions" value="3026"/>
</dbReference>
<dbReference type="IntAct" id="Q63622">
    <property type="interactions" value="19"/>
</dbReference>
<dbReference type="MINT" id="Q63622"/>
<dbReference type="STRING" id="10116.ENSRNOP00000052268"/>
<dbReference type="iPTMnet" id="Q63622"/>
<dbReference type="PhosphoSitePlus" id="Q63622"/>
<dbReference type="SwissPalm" id="Q63622"/>
<dbReference type="PaxDb" id="10116-ENSRNOP00000052268"/>
<dbReference type="ABCD" id="Q63622">
    <property type="antibodies" value="3 sequenced antibodies"/>
</dbReference>
<dbReference type="Ensembl" id="ENSRNOT00000108774.1">
    <molecule id="Q63622-7"/>
    <property type="protein sequence ID" value="ENSRNOP00000092409.1"/>
    <property type="gene ID" value="ENSRNOG00000022635.8"/>
</dbReference>
<dbReference type="Ensembl" id="ENSRNOT00000110277.1">
    <molecule id="Q63622-1"/>
    <property type="protein sequence ID" value="ENSRNOP00000097641.1"/>
    <property type="gene ID" value="ENSRNOG00000022635.8"/>
</dbReference>
<dbReference type="GeneID" id="64053"/>
<dbReference type="KEGG" id="rno:64053"/>
<dbReference type="UCSC" id="RGD:619895">
    <molecule id="Q63622-1"/>
    <property type="organism name" value="rat"/>
</dbReference>
<dbReference type="AGR" id="RGD:619895"/>
<dbReference type="CTD" id="1740"/>
<dbReference type="RGD" id="619895">
    <property type="gene designation" value="Dlg2"/>
</dbReference>
<dbReference type="eggNOG" id="KOG0708">
    <property type="taxonomic scope" value="Eukaryota"/>
</dbReference>
<dbReference type="GeneTree" id="ENSGT00940000155156"/>
<dbReference type="InParanoid" id="Q63622"/>
<dbReference type="Reactome" id="R-RNO-438066">
    <property type="pathway name" value="Unblocking of NMDA receptors, glutamate binding and activation"/>
</dbReference>
<dbReference type="Reactome" id="R-RNO-5673001">
    <property type="pathway name" value="RAF/MAP kinase cascade"/>
</dbReference>
<dbReference type="Reactome" id="R-RNO-6794361">
    <property type="pathway name" value="Neurexins and neuroligins"/>
</dbReference>
<dbReference type="EvolutionaryTrace" id="Q63622"/>
<dbReference type="PRO" id="PR:Q63622"/>
<dbReference type="Proteomes" id="UP000002494">
    <property type="component" value="Chromosome 1"/>
</dbReference>
<dbReference type="GO" id="GO:1904115">
    <property type="term" value="C:axon cytoplasm"/>
    <property type="evidence" value="ECO:0007669"/>
    <property type="project" value="GOC"/>
</dbReference>
<dbReference type="GO" id="GO:0043194">
    <property type="term" value="C:axon initial segment"/>
    <property type="evidence" value="ECO:0000266"/>
    <property type="project" value="RGD"/>
</dbReference>
<dbReference type="GO" id="GO:0016323">
    <property type="term" value="C:basolateral plasma membrane"/>
    <property type="evidence" value="ECO:0000318"/>
    <property type="project" value="GO_Central"/>
</dbReference>
<dbReference type="GO" id="GO:0030054">
    <property type="term" value="C:cell junction"/>
    <property type="evidence" value="ECO:0000266"/>
    <property type="project" value="RGD"/>
</dbReference>
<dbReference type="GO" id="GO:0030425">
    <property type="term" value="C:dendrite"/>
    <property type="evidence" value="ECO:0000314"/>
    <property type="project" value="RGD"/>
</dbReference>
<dbReference type="GO" id="GO:0098978">
    <property type="term" value="C:glutamatergic synapse"/>
    <property type="evidence" value="ECO:0000314"/>
    <property type="project" value="SynGO"/>
</dbReference>
<dbReference type="GO" id="GO:0044224">
    <property type="term" value="C:juxtaparanode region of axon"/>
    <property type="evidence" value="ECO:0000314"/>
    <property type="project" value="UniProtKB"/>
</dbReference>
<dbReference type="GO" id="GO:0016020">
    <property type="term" value="C:membrane"/>
    <property type="evidence" value="ECO:0000314"/>
    <property type="project" value="UniProtKB"/>
</dbReference>
<dbReference type="GO" id="GO:0031594">
    <property type="term" value="C:neuromuscular junction"/>
    <property type="evidence" value="ECO:0000318"/>
    <property type="project" value="GO_Central"/>
</dbReference>
<dbReference type="GO" id="GO:0043005">
    <property type="term" value="C:neuron projection"/>
    <property type="evidence" value="ECO:0000318"/>
    <property type="project" value="GO_Central"/>
</dbReference>
<dbReference type="GO" id="GO:0043025">
    <property type="term" value="C:neuronal cell body"/>
    <property type="evidence" value="ECO:0000314"/>
    <property type="project" value="RGD"/>
</dbReference>
<dbReference type="GO" id="GO:0043204">
    <property type="term" value="C:perikaryon"/>
    <property type="evidence" value="ECO:0007669"/>
    <property type="project" value="UniProtKB-SubCell"/>
</dbReference>
<dbReference type="GO" id="GO:0014069">
    <property type="term" value="C:postsynaptic density"/>
    <property type="evidence" value="ECO:0000266"/>
    <property type="project" value="RGD"/>
</dbReference>
<dbReference type="GO" id="GO:0098839">
    <property type="term" value="C:postsynaptic density membrane"/>
    <property type="evidence" value="ECO:0000314"/>
    <property type="project" value="SynGO"/>
</dbReference>
<dbReference type="GO" id="GO:0045211">
    <property type="term" value="C:postsynaptic membrane"/>
    <property type="evidence" value="ECO:0000266"/>
    <property type="project" value="RGD"/>
</dbReference>
<dbReference type="GO" id="GO:0030672">
    <property type="term" value="C:synaptic vesicle membrane"/>
    <property type="evidence" value="ECO:0000266"/>
    <property type="project" value="RGD"/>
</dbReference>
<dbReference type="GO" id="GO:0035255">
    <property type="term" value="F:ionotropic glutamate receptor binding"/>
    <property type="evidence" value="ECO:0000318"/>
    <property type="project" value="GO_Central"/>
</dbReference>
<dbReference type="GO" id="GO:0019900">
    <property type="term" value="F:kinase binding"/>
    <property type="evidence" value="ECO:0000266"/>
    <property type="project" value="RGD"/>
</dbReference>
<dbReference type="GO" id="GO:0030165">
    <property type="term" value="F:PDZ domain binding"/>
    <property type="evidence" value="ECO:0000353"/>
    <property type="project" value="RGD"/>
</dbReference>
<dbReference type="GO" id="GO:0019901">
    <property type="term" value="F:protein kinase binding"/>
    <property type="evidence" value="ECO:0000318"/>
    <property type="project" value="GO_Central"/>
</dbReference>
<dbReference type="GO" id="GO:0019903">
    <property type="term" value="F:protein phosphatase binding"/>
    <property type="evidence" value="ECO:0000353"/>
    <property type="project" value="BHF-UCL"/>
</dbReference>
<dbReference type="GO" id="GO:0044877">
    <property type="term" value="F:protein-containing complex binding"/>
    <property type="evidence" value="ECO:0000353"/>
    <property type="project" value="RGD"/>
</dbReference>
<dbReference type="GO" id="GO:0098919">
    <property type="term" value="F:structural constituent of postsynaptic density"/>
    <property type="evidence" value="ECO:0000266"/>
    <property type="project" value="RGD"/>
</dbReference>
<dbReference type="GO" id="GO:0099641">
    <property type="term" value="P:anterograde axonal protein transport"/>
    <property type="evidence" value="ECO:0000266"/>
    <property type="project" value="RGD"/>
</dbReference>
<dbReference type="GO" id="GO:0098609">
    <property type="term" value="P:cell-cell adhesion"/>
    <property type="evidence" value="ECO:0000318"/>
    <property type="project" value="GO_Central"/>
</dbReference>
<dbReference type="GO" id="GO:0035865">
    <property type="term" value="P:cellular response to potassium ion"/>
    <property type="evidence" value="ECO:0000266"/>
    <property type="project" value="RGD"/>
</dbReference>
<dbReference type="GO" id="GO:0007268">
    <property type="term" value="P:chemical synaptic transmission"/>
    <property type="evidence" value="ECO:0000266"/>
    <property type="project" value="RGD"/>
</dbReference>
<dbReference type="GO" id="GO:0045163">
    <property type="term" value="P:clustering of voltage-gated potassium channels"/>
    <property type="evidence" value="ECO:0000266"/>
    <property type="project" value="RGD"/>
</dbReference>
<dbReference type="GO" id="GO:0045197">
    <property type="term" value="P:establishment or maintenance of epithelial cell apical/basal polarity"/>
    <property type="evidence" value="ECO:0000318"/>
    <property type="project" value="GO_Central"/>
</dbReference>
<dbReference type="GO" id="GO:0007399">
    <property type="term" value="P:nervous system development"/>
    <property type="evidence" value="ECO:0000318"/>
    <property type="project" value="GO_Central"/>
</dbReference>
<dbReference type="GO" id="GO:0045161">
    <property type="term" value="P:neuronal ion channel clustering"/>
    <property type="evidence" value="ECO:0000315"/>
    <property type="project" value="RGD"/>
</dbReference>
<dbReference type="GO" id="GO:0099645">
    <property type="term" value="P:neurotransmitter receptor localization to postsynaptic specialization membrane"/>
    <property type="evidence" value="ECO:0000266"/>
    <property type="project" value="RGD"/>
</dbReference>
<dbReference type="GO" id="GO:0035418">
    <property type="term" value="P:protein localization to synapse"/>
    <property type="evidence" value="ECO:0000318"/>
    <property type="project" value="GO_Central"/>
</dbReference>
<dbReference type="GO" id="GO:0043113">
    <property type="term" value="P:receptor clustering"/>
    <property type="evidence" value="ECO:0000315"/>
    <property type="project" value="RGD"/>
</dbReference>
<dbReference type="GO" id="GO:0097120">
    <property type="term" value="P:receptor localization to synapse"/>
    <property type="evidence" value="ECO:0000318"/>
    <property type="project" value="GO_Central"/>
</dbReference>
<dbReference type="GO" id="GO:0099072">
    <property type="term" value="P:regulation of postsynaptic membrane neurotransmitter receptor levels"/>
    <property type="evidence" value="ECO:0000318"/>
    <property type="project" value="GO_Central"/>
</dbReference>
<dbReference type="GO" id="GO:0099642">
    <property type="term" value="P:retrograde axonal protein transport"/>
    <property type="evidence" value="ECO:0000266"/>
    <property type="project" value="RGD"/>
</dbReference>
<dbReference type="GO" id="GO:0019233">
    <property type="term" value="P:sensory perception of pain"/>
    <property type="evidence" value="ECO:0000266"/>
    <property type="project" value="RGD"/>
</dbReference>
<dbReference type="CDD" id="cd00071">
    <property type="entry name" value="GMPK"/>
    <property type="match status" value="1"/>
</dbReference>
<dbReference type="CDD" id="cd06723">
    <property type="entry name" value="PDZ1_Dlg1-2-4-like"/>
    <property type="match status" value="1"/>
</dbReference>
<dbReference type="CDD" id="cd06724">
    <property type="entry name" value="PDZ2_Dlg1-2-4-like"/>
    <property type="match status" value="1"/>
</dbReference>
<dbReference type="CDD" id="cd06795">
    <property type="entry name" value="PDZ3_Dlg1-2-4-like"/>
    <property type="match status" value="1"/>
</dbReference>
<dbReference type="CDD" id="cd12032">
    <property type="entry name" value="SH3_DLG2"/>
    <property type="match status" value="1"/>
</dbReference>
<dbReference type="FunFam" id="3.40.50.300:FF:001402">
    <property type="entry name" value="Discs, large homolog 3 (Drosophila)"/>
    <property type="match status" value="1"/>
</dbReference>
<dbReference type="FunFam" id="2.30.30.40:FF:000008">
    <property type="entry name" value="Disks large homolog 1 isoform 2"/>
    <property type="match status" value="1"/>
</dbReference>
<dbReference type="FunFam" id="2.30.42.10:FF:000001">
    <property type="entry name" value="Disks large homolog 1 isoform 2"/>
    <property type="match status" value="1"/>
</dbReference>
<dbReference type="FunFam" id="3.30.63.10:FF:000001">
    <property type="entry name" value="Disks large homolog 1 isoform 2"/>
    <property type="match status" value="1"/>
</dbReference>
<dbReference type="FunFam" id="2.30.42.10:FF:000091">
    <property type="entry name" value="disks large homolog 1 isoform X8"/>
    <property type="match status" value="1"/>
</dbReference>
<dbReference type="FunFam" id="2.30.30.40:FF:000027">
    <property type="entry name" value="Disks large homolog 3 isoform 1"/>
    <property type="match status" value="1"/>
</dbReference>
<dbReference type="FunFam" id="2.30.42.10:FF:000002">
    <property type="entry name" value="Disks large homolog 4 isoform 2"/>
    <property type="match status" value="1"/>
</dbReference>
<dbReference type="Gene3D" id="2.30.42.10">
    <property type="match status" value="3"/>
</dbReference>
<dbReference type="Gene3D" id="3.30.63.10">
    <property type="entry name" value="Guanylate Kinase phosphate binding domain"/>
    <property type="match status" value="1"/>
</dbReference>
<dbReference type="Gene3D" id="3.40.50.300">
    <property type="entry name" value="P-loop containing nucleotide triphosphate hydrolases"/>
    <property type="match status" value="1"/>
</dbReference>
<dbReference type="Gene3D" id="2.30.30.40">
    <property type="entry name" value="SH3 Domains"/>
    <property type="match status" value="1"/>
</dbReference>
<dbReference type="InterPro" id="IPR019583">
    <property type="entry name" value="DLG1-4_PDZ_assoc"/>
</dbReference>
<dbReference type="InterPro" id="IPR016313">
    <property type="entry name" value="DLG1-like"/>
</dbReference>
<dbReference type="InterPro" id="IPR019590">
    <property type="entry name" value="DLG1_PEST_dom"/>
</dbReference>
<dbReference type="InterPro" id="IPR035759">
    <property type="entry name" value="DLG2_SH3"/>
</dbReference>
<dbReference type="InterPro" id="IPR008145">
    <property type="entry name" value="GK/Ca_channel_bsu"/>
</dbReference>
<dbReference type="InterPro" id="IPR008144">
    <property type="entry name" value="Guanylate_kin-like_dom"/>
</dbReference>
<dbReference type="InterPro" id="IPR020590">
    <property type="entry name" value="Guanylate_kinase_CS"/>
</dbReference>
<dbReference type="InterPro" id="IPR027417">
    <property type="entry name" value="P-loop_NTPase"/>
</dbReference>
<dbReference type="InterPro" id="IPR001478">
    <property type="entry name" value="PDZ"/>
</dbReference>
<dbReference type="InterPro" id="IPR036034">
    <property type="entry name" value="PDZ_sf"/>
</dbReference>
<dbReference type="InterPro" id="IPR036028">
    <property type="entry name" value="SH3-like_dom_sf"/>
</dbReference>
<dbReference type="InterPro" id="IPR001452">
    <property type="entry name" value="SH3_domain"/>
</dbReference>
<dbReference type="InterPro" id="IPR050614">
    <property type="entry name" value="Synaptic_Scaffolding_LAP-MAGUK"/>
</dbReference>
<dbReference type="PANTHER" id="PTHR23119">
    <property type="entry name" value="DISCS LARGE"/>
    <property type="match status" value="1"/>
</dbReference>
<dbReference type="PANTHER" id="PTHR23119:SF6">
    <property type="entry name" value="DISKS LARGE HOMOLOG 2"/>
    <property type="match status" value="1"/>
</dbReference>
<dbReference type="Pfam" id="PF00625">
    <property type="entry name" value="Guanylate_kin"/>
    <property type="match status" value="1"/>
</dbReference>
<dbReference type="Pfam" id="PF10608">
    <property type="entry name" value="MAGUK_N_PEST"/>
    <property type="match status" value="1"/>
</dbReference>
<dbReference type="Pfam" id="PF00595">
    <property type="entry name" value="PDZ"/>
    <property type="match status" value="3"/>
</dbReference>
<dbReference type="Pfam" id="PF10600">
    <property type="entry name" value="PDZ_assoc"/>
    <property type="match status" value="1"/>
</dbReference>
<dbReference type="Pfam" id="PF00018">
    <property type="entry name" value="SH3_1"/>
    <property type="match status" value="1"/>
</dbReference>
<dbReference type="PIRSF" id="PIRSF001741">
    <property type="entry name" value="MAGUK_DLGH"/>
    <property type="match status" value="1"/>
</dbReference>
<dbReference type="SMART" id="SM00072">
    <property type="entry name" value="GuKc"/>
    <property type="match status" value="1"/>
</dbReference>
<dbReference type="SMART" id="SM01277">
    <property type="entry name" value="MAGUK_N_PEST"/>
    <property type="match status" value="1"/>
</dbReference>
<dbReference type="SMART" id="SM00228">
    <property type="entry name" value="PDZ"/>
    <property type="match status" value="3"/>
</dbReference>
<dbReference type="SMART" id="SM00326">
    <property type="entry name" value="SH3"/>
    <property type="match status" value="1"/>
</dbReference>
<dbReference type="SUPFAM" id="SSF52540">
    <property type="entry name" value="P-loop containing nucleoside triphosphate hydrolases"/>
    <property type="match status" value="1"/>
</dbReference>
<dbReference type="SUPFAM" id="SSF50156">
    <property type="entry name" value="PDZ domain-like"/>
    <property type="match status" value="3"/>
</dbReference>
<dbReference type="SUPFAM" id="SSF50044">
    <property type="entry name" value="SH3-domain"/>
    <property type="match status" value="1"/>
</dbReference>
<dbReference type="PROSITE" id="PS00856">
    <property type="entry name" value="GUANYLATE_KINASE_1"/>
    <property type="match status" value="1"/>
</dbReference>
<dbReference type="PROSITE" id="PS50052">
    <property type="entry name" value="GUANYLATE_KINASE_2"/>
    <property type="match status" value="1"/>
</dbReference>
<dbReference type="PROSITE" id="PS50106">
    <property type="entry name" value="PDZ"/>
    <property type="match status" value="3"/>
</dbReference>
<dbReference type="PROSITE" id="PS50002">
    <property type="entry name" value="SH3"/>
    <property type="match status" value="1"/>
</dbReference>
<accession>Q63622</accession>
<accession>P70548</accession>
<accession>Q62939</accession>
<organism>
    <name type="scientific">Rattus norvegicus</name>
    <name type="common">Rat</name>
    <dbReference type="NCBI Taxonomy" id="10116"/>
    <lineage>
        <taxon>Eukaryota</taxon>
        <taxon>Metazoa</taxon>
        <taxon>Chordata</taxon>
        <taxon>Craniata</taxon>
        <taxon>Vertebrata</taxon>
        <taxon>Euteleostomi</taxon>
        <taxon>Mammalia</taxon>
        <taxon>Eutheria</taxon>
        <taxon>Euarchontoglires</taxon>
        <taxon>Glires</taxon>
        <taxon>Rodentia</taxon>
        <taxon>Myomorpha</taxon>
        <taxon>Muroidea</taxon>
        <taxon>Muridae</taxon>
        <taxon>Murinae</taxon>
        <taxon>Rattus</taxon>
    </lineage>
</organism>
<comment type="function">
    <text evidence="1">Required for perception of chronic pain through NMDA receptor signaling. Regulates surface expression of NMDA receptors in dorsal horn neurons of the spinal cord. Interacts with the cytoplasmic tail of NMDA receptor subunits as well as inward rectifying potassium channels. Involved in regulation of synaptic stability at cholinergic synapses. Part of the postsynaptic protein scaffold of excitatory synapses (By similarity).</text>
</comment>
<comment type="subunit">
    <text evidence="2 3 9 11 12 13 14 15">Interacts through its PDZ domains with NETO1. Interacts with NOS1/nNOS through second PDZ domain (PubMed:8922396). Interacts with KCNJ2/Kir2.1 (via C-terminus) through one of its PDZ domains (By similarity). Interacts with KCNJ4 (By similarity). Interacts with FRMPD4 (via C-terminus) (PubMed:19118189). Interacts with LRFN1 (PubMed:16630835). Interacts with LRFN2 and LRFN4. Interacts with FASLG (By similarity). Interacts with ADAM22 (PubMed:20089912). Interacts with DGKI (via PDZ-binding motif) (PubMed:21119615).</text>
</comment>
<comment type="interaction">
    <interactant intactId="EBI-396947">
        <id>Q63622</id>
    </interactant>
    <interactant intactId="EBI-8523614">
        <id>F1MAB7</id>
        <label>Dgki</label>
    </interactant>
    <organismsDiffer>false</organismsDiffer>
    <experiments>2</experiments>
</comment>
<comment type="interaction">
    <interactant intactId="EBI-396947">
        <id>Q63622</id>
    </interactant>
    <interactant intactId="EBI-8570505">
        <id>O08560</id>
        <label>Dgkz</label>
    </interactant>
    <organismsDiffer>false</organismsDiffer>
    <experiments>4</experiments>
</comment>
<comment type="interaction">
    <interactant intactId="EBI-396947">
        <id>Q63622</id>
    </interactant>
    <interactant intactId="EBI-631571">
        <id>P34926</id>
        <label>Map1a</label>
    </interactant>
    <organismsDiffer>false</organismsDiffer>
    <experiments>4</experiments>
</comment>
<comment type="interaction">
    <interactant intactId="EBI-396947">
        <id>Q63622</id>
    </interactant>
    <interactant intactId="EBI-1174262">
        <id>Q01814-1</id>
        <label>ATP2B2</label>
    </interactant>
    <organismsDiffer>true</organismsDiffer>
    <experiments>2</experiments>
</comment>
<comment type="interaction">
    <interactant intactId="EBI-396947">
        <id>Q63622</id>
    </interactant>
    <interactant intactId="EBI-1174437">
        <id>P23634-6</id>
        <label>ATP2B4</label>
    </interactant>
    <organismsDiffer>true</organismsDiffer>
    <experiments>2</experiments>
</comment>
<comment type="interaction">
    <interactant intactId="EBI-396947">
        <id>Q63622</id>
    </interactant>
    <interactant intactId="EBI-3870393">
        <id>P34998</id>
        <label>CRHR1</label>
    </interactant>
    <organismsDiffer>true</organismsDiffer>
    <experiments>2</experiments>
</comment>
<comment type="interaction">
    <interactant intactId="EBI-396947">
        <id>Q63622</id>
    </interactant>
    <interactant intactId="EBI-465669">
        <id>O60333-3</id>
        <label>KIF1B</label>
    </interactant>
    <organismsDiffer>true</organismsDiffer>
    <experiments>3</experiments>
</comment>
<comment type="subcellular location">
    <subcellularLocation>
        <location evidence="7">Cell membrane</location>
        <topology evidence="7">Lipid-anchor</topology>
    </subcellularLocation>
    <subcellularLocation>
        <location evidence="8">Postsynaptic density</location>
    </subcellularLocation>
    <subcellularLocation>
        <location>Synapse</location>
    </subcellularLocation>
    <subcellularLocation>
        <location evidence="13">Cell projection</location>
        <location evidence="13">Axon</location>
    </subcellularLocation>
    <subcellularLocation>
        <location evidence="9 13">Membrane</location>
    </subcellularLocation>
    <subcellularLocation>
        <location evidence="8">Perikaryon</location>
    </subcellularLocation>
    <text evidence="8">Concentrated in soma and postsynaptic density of a subset of neurons (PubMed:11095503).</text>
</comment>
<comment type="alternative products">
    <event type="alternative splicing"/>
    <isoform>
        <id>Q63622-1</id>
        <name>1</name>
        <name>PSD-93b</name>
        <sequence type="displayed"/>
    </isoform>
    <isoform>
        <id>Q63622-2</id>
        <name>2</name>
        <name>PSD-93a</name>
        <sequence type="described" ref="VSP_015528"/>
    </isoform>
    <isoform>
        <id>Q63622-3</id>
        <name>3</name>
        <name>PSD-93c</name>
        <sequence type="described" ref="VSP_015527 VSP_015529 VSP_015530"/>
    </isoform>
    <isoform>
        <id>Q63622-4</id>
        <name>4</name>
        <name>PSD-93-delta</name>
        <sequence type="described" ref="VSP_015526"/>
    </isoform>
    <isoform>
        <id>Q63622-5</id>
        <name>5</name>
        <name>PSD-93d</name>
        <sequence type="described" ref="VSP_015525"/>
    </isoform>
    <isoform>
        <id>Q63622-6</id>
        <name>6</name>
        <sequence type="described" ref="VSP_015531 VSP_015533"/>
    </isoform>
    <isoform>
        <id>Q63622-7</id>
        <name>7</name>
        <sequence type="described" ref="VSP_015532"/>
    </isoform>
</comment>
<comment type="tissue specificity">
    <text evidence="10 13 15">Detected in juxtaparanodal zones in the central nervous system and at nerve terminal plexuses of basket cells in the cerebellum (at protein level) (PubMed:20089912). Brain. High levels in cerebellar Purkinje cells. Expressed in pyramidal cells of the Ammons's horn and granular cells of the dentate gyrus in the hippocampus as well as cerebral cortex and striatum. High levels in dorsal horn of spinal cord.</text>
</comment>
<comment type="developmental stage">
    <text evidence="15">High levels in developing brain and spinal cord, sensory neurons of dorsal root and trigeminal ganglia, myenteric neurons of the intestine as well as in non-neuronal cells of adrenal, thymus and submandibular glands of 15 dpc embryos.</text>
</comment>
<comment type="PTM">
    <text evidence="7">Palmitoylation of isoform 1 and isoform 2 is not required for targeting to postsynaptic density.</text>
</comment>
<comment type="similarity">
    <text evidence="19">Belongs to the MAGUK family.</text>
</comment>
<evidence type="ECO:0000250" key="1"/>
<evidence type="ECO:0000250" key="2">
    <source>
        <dbReference type="UniProtKB" id="Q15700"/>
    </source>
</evidence>
<evidence type="ECO:0000250" key="3">
    <source>
        <dbReference type="UniProtKB" id="Q91XM9"/>
    </source>
</evidence>
<evidence type="ECO:0000255" key="4">
    <source>
        <dbReference type="PROSITE-ProRule" id="PRU00100"/>
    </source>
</evidence>
<evidence type="ECO:0000255" key="5">
    <source>
        <dbReference type="PROSITE-ProRule" id="PRU00143"/>
    </source>
</evidence>
<evidence type="ECO:0000255" key="6">
    <source>
        <dbReference type="PROSITE-ProRule" id="PRU00192"/>
    </source>
</evidence>
<evidence type="ECO:0000269" key="7">
    <source>
    </source>
</evidence>
<evidence type="ECO:0000269" key="8">
    <source>
    </source>
</evidence>
<evidence type="ECO:0000269" key="9">
    <source>
    </source>
</evidence>
<evidence type="ECO:0000269" key="10">
    <source>
    </source>
</evidence>
<evidence type="ECO:0000269" key="11">
    <source>
    </source>
</evidence>
<evidence type="ECO:0000269" key="12">
    <source>
    </source>
</evidence>
<evidence type="ECO:0000269" key="13">
    <source>
    </source>
</evidence>
<evidence type="ECO:0000269" key="14">
    <source>
    </source>
</evidence>
<evidence type="ECO:0000269" key="15">
    <source>
    </source>
</evidence>
<evidence type="ECO:0000303" key="16">
    <source>
    </source>
</evidence>
<evidence type="ECO:0000303" key="17">
    <source>
    </source>
</evidence>
<evidence type="ECO:0000303" key="18">
    <source>
    </source>
</evidence>
<evidence type="ECO:0000305" key="19"/>
<evidence type="ECO:0007744" key="20">
    <source>
    </source>
</evidence>
<evidence type="ECO:0007829" key="21">
    <source>
        <dbReference type="PDB" id="4H11"/>
    </source>
</evidence>
<name>DLG2_RAT</name>
<feature type="chain" id="PRO_0000094555" description="Disks large homolog 2">
    <location>
        <begin position="1"/>
        <end position="852"/>
    </location>
</feature>
<feature type="domain" description="PDZ 1" evidence="5">
    <location>
        <begin position="98"/>
        <end position="184"/>
    </location>
</feature>
<feature type="domain" description="PDZ 2" evidence="5">
    <location>
        <begin position="193"/>
        <end position="279"/>
    </location>
</feature>
<feature type="domain" description="PDZ 3" evidence="5">
    <location>
        <begin position="421"/>
        <end position="501"/>
    </location>
</feature>
<feature type="domain" description="SH3" evidence="6">
    <location>
        <begin position="536"/>
        <end position="606"/>
    </location>
</feature>
<feature type="domain" description="Guanylate kinase-like" evidence="4">
    <location>
        <begin position="662"/>
        <end position="837"/>
    </location>
</feature>
<feature type="modified residue" description="Phosphoserine" evidence="3">
    <location>
        <position position="28"/>
    </location>
</feature>
<feature type="modified residue" description="Phosphotyrosine" evidence="3">
    <location>
        <position position="58"/>
    </location>
</feature>
<feature type="modified residue" description="Phosphoserine" evidence="3">
    <location>
        <position position="65"/>
    </location>
</feature>
<feature type="modified residue" description="Phosphoserine" evidence="3">
    <location>
        <position position="307"/>
    </location>
</feature>
<feature type="modified residue" description="Phosphoserine" evidence="3">
    <location>
        <position position="328"/>
    </location>
</feature>
<feature type="modified residue" description="Phosphoserine" evidence="20">
    <location>
        <position position="360"/>
    </location>
</feature>
<feature type="modified residue" description="Phosphoserine" evidence="20">
    <location>
        <position position="365"/>
    </location>
</feature>
<feature type="modified residue" description="Phosphoserine" evidence="20">
    <location>
        <position position="406"/>
    </location>
</feature>
<feature type="modified residue" description="Phosphoserine" evidence="20">
    <location>
        <position position="414"/>
    </location>
</feature>
<feature type="modified residue" description="Phosphotyrosine" evidence="3">
    <location>
        <position position="505"/>
    </location>
</feature>
<feature type="modified residue" description="Phosphoserine" evidence="20">
    <location>
        <position position="528"/>
    </location>
</feature>
<feature type="modified residue" description="Phosphoserine" evidence="20">
    <location>
        <position position="530"/>
    </location>
</feature>
<feature type="modified residue" description="Phosphoserine" evidence="3">
    <location>
        <position position="553"/>
    </location>
</feature>
<feature type="modified residue" description="Phosphotyrosine" evidence="3">
    <location>
        <position position="732"/>
    </location>
</feature>
<feature type="modified residue" description="Phosphotyrosine" evidence="3">
    <location>
        <position position="737"/>
    </location>
</feature>
<feature type="lipid moiety-binding region" description="S-palmitoyl cysteine" evidence="7">
    <location>
        <position position="5"/>
    </location>
</feature>
<feature type="lipid moiety-binding region" description="S-palmitoyl cysteine" evidence="7">
    <location>
        <position position="7"/>
    </location>
</feature>
<feature type="splice variant" id="VSP_015525" description="In isoform 5." evidence="18">
    <location>
        <begin position="1"/>
        <end position="246"/>
    </location>
</feature>
<feature type="splice variant" id="VSP_015526" description="In isoform 4." evidence="19">
    <original>MFFACYCALRTNVKKYRYQDEDGPHDHSLPRLTHEVRGPELVHVSEKNLSQIENVHGYVLQSHISPLK</original>
    <variation>MNAYLTKQHSCSRGSDGMDAGRGVPTLIRDAHCACGWQRNAQGLGYSSQTMPSSGPGGPASNRTKLVTLWDSVRKSPHKTSTKGKGNCGERCACPHGWFSPAQ</variation>
    <location>
        <begin position="1"/>
        <end position="68"/>
    </location>
</feature>
<feature type="splice variant" id="VSP_015527" description="In isoform 3." evidence="18">
    <location>
        <begin position="1"/>
        <end position="61"/>
    </location>
</feature>
<feature type="splice variant" id="VSP_015528" description="In isoform 2." evidence="18">
    <original>MFFACYCALRTNV</original>
    <variation>MICHCKVACTNNTLSLMFGC</variation>
    <location>
        <begin position="1"/>
        <end position="13"/>
    </location>
</feature>
<feature type="splice variant" id="VSP_015529" description="In isoform 3." evidence="18">
    <original>SHISPLK</original>
    <variation>MQHAFIP</variation>
    <location>
        <begin position="62"/>
        <end position="68"/>
    </location>
</feature>
<feature type="splice variant" id="VSP_015530" description="In isoform 3." evidence="18">
    <location>
        <begin position="341"/>
        <end position="392"/>
    </location>
</feature>
<feature type="splice variant" id="VSP_015531" description="In isoform 6." evidence="17">
    <location>
        <begin position="450"/>
        <end position="454"/>
    </location>
</feature>
<feature type="splice variant" id="VSP_015533" description="In isoform 6." evidence="17">
    <location>
        <begin position="626"/>
        <end position="641"/>
    </location>
</feature>
<feature type="splice variant" id="VSP_015532" description="In isoform 7." evidence="19">
    <original>GDIPGLGDDGYGTKTL</original>
    <variation>GSFNDKRKKSFIFSRKFPFYKNKEQSEQETSDPE</variation>
    <location>
        <begin position="626"/>
        <end position="641"/>
    </location>
</feature>
<feature type="mutagenesis site" description="Loss of palmitoylation and targeting to postsynaptic density." evidence="7">
    <original>C</original>
    <variation>S</variation>
    <location>
        <position position="5"/>
    </location>
</feature>
<feature type="mutagenesis site" description="Loss of palmitoylation and targeting to postsynaptic density." evidence="7">
    <original>C</original>
    <variation>S</variation>
    <location>
        <position position="7"/>
    </location>
</feature>
<feature type="sequence conflict" description="In Ref. 2; AAC52643." evidence="19" ref="2">
    <original>VR</original>
    <variation>IL</variation>
    <location>
        <begin position="181"/>
        <end position="182"/>
    </location>
</feature>
<feature type="sequence conflict" description="In Ref. 2; AAC52643." evidence="19" ref="2">
    <original>I</original>
    <variation>M</variation>
    <location>
        <position position="228"/>
    </location>
</feature>
<feature type="sequence conflict" description="In Ref. 2; AAC52643." evidence="19" ref="2">
    <original>R</original>
    <variation>K</variation>
    <location>
        <position position="326"/>
    </location>
</feature>
<feature type="sequence conflict" description="In Ref. 3; AAB48562." evidence="19" ref="3">
    <original>D</original>
    <variation>E</variation>
    <location>
        <position position="339"/>
    </location>
</feature>
<feature type="sequence conflict" description="In Ref. 2; AAC52643." evidence="19" ref="2">
    <original>GD</original>
    <variation>RK</variation>
    <location>
        <begin position="464"/>
        <end position="465"/>
    </location>
</feature>
<feature type="sequence conflict" description="In Ref. 2." evidence="19" ref="2">
    <original>D</original>
    <variation>H</variation>
    <location>
        <position position="474"/>
    </location>
</feature>
<feature type="sequence conflict" description="In Ref. 2." evidence="19" ref="2">
    <original>R</original>
    <variation>P</variation>
    <location>
        <position position="476"/>
    </location>
</feature>
<feature type="sequence conflict" description="In Ref. 2." evidence="19" ref="2">
    <original>A</original>
    <variation>D</variation>
    <location>
        <position position="478"/>
    </location>
</feature>
<feature type="sequence conflict" description="In Ref. 2; AAC52643." evidence="19" ref="2">
    <original>AAA</original>
    <variation>LP</variation>
    <location>
        <begin position="484"/>
        <end position="486"/>
    </location>
</feature>
<feature type="sequence conflict" description="In Ref. 2; AAC52643." evidence="19" ref="2">
    <original>A</original>
    <variation>S</variation>
    <location>
        <position position="506"/>
    </location>
</feature>
<feature type="sequence conflict" description="In Ref. 2; AAC52643." evidence="19" ref="2">
    <original>H</original>
    <variation>N</variation>
    <location>
        <position position="569"/>
    </location>
</feature>
<feature type="sequence conflict" description="In Ref. 2; AAC52643." evidence="19" ref="2">
    <original>L</original>
    <variation>Q</variation>
    <location>
        <position position="586"/>
    </location>
</feature>
<feature type="sequence conflict" description="In Ref. 5." evidence="19" ref="5">
    <original>DIPG</original>
    <variation>TSR</variation>
    <location>
        <begin position="627"/>
        <end position="630"/>
    </location>
</feature>
<feature type="sequence conflict" description="In Ref. 3; AAB48562." evidence="19" ref="3">
    <original>K</original>
    <variation>A</variation>
    <location>
        <position position="639"/>
    </location>
</feature>
<feature type="sequence conflict" description="In Ref. 1; AAB53243." evidence="19" ref="1">
    <original>F</original>
    <variation>L</variation>
    <location>
        <position position="726"/>
    </location>
</feature>
<feature type="sequence conflict" description="In Ref. 2; AAC52643." evidence="19" ref="2">
    <original>N</original>
    <variation>Y</variation>
    <location>
        <position position="733"/>
    </location>
</feature>
<feature type="sequence conflict" description="In Ref. 1; AAB53243." evidence="19" ref="1">
    <original>E</original>
    <variation>V</variation>
    <location>
        <position position="749"/>
    </location>
</feature>
<feature type="sequence conflict" description="In Ref. 2; AAC52643." evidence="19" ref="2">
    <original>L</original>
    <variation>H</variation>
    <location>
        <position position="756"/>
    </location>
</feature>
<feature type="sequence conflict" description="In Ref. 2." evidence="19" ref="2">
    <original>KR</original>
    <variation>NG</variation>
    <location>
        <begin position="791"/>
        <end position="792"/>
    </location>
</feature>
<feature type="sequence conflict" description="In Ref. 2." evidence="19" ref="2">
    <original>T</original>
    <variation>M</variation>
    <location>
        <position position="794"/>
    </location>
</feature>
<feature type="strand" evidence="21">
    <location>
        <begin position="93"/>
        <end position="102"/>
    </location>
</feature>
<feature type="strand" evidence="21">
    <location>
        <begin position="109"/>
        <end position="113"/>
    </location>
</feature>
<feature type="helix" evidence="21">
    <location>
        <begin position="121"/>
        <end position="123"/>
    </location>
</feature>
<feature type="strand" evidence="21">
    <location>
        <begin position="127"/>
        <end position="132"/>
    </location>
</feature>
<feature type="helix" evidence="21">
    <location>
        <begin position="137"/>
        <end position="141"/>
    </location>
</feature>
<feature type="strand" evidence="21">
    <location>
        <begin position="149"/>
        <end position="153"/>
    </location>
</feature>
<feature type="helix" evidence="21">
    <location>
        <begin position="163"/>
        <end position="172"/>
    </location>
</feature>
<feature type="strand" evidence="21">
    <location>
        <begin position="175"/>
        <end position="184"/>
    </location>
</feature>
<keyword id="KW-0002">3D-structure</keyword>
<keyword id="KW-0025">Alternative splicing</keyword>
<keyword id="KW-1003">Cell membrane</keyword>
<keyword id="KW-0966">Cell projection</keyword>
<keyword id="KW-0449">Lipoprotein</keyword>
<keyword id="KW-0472">Membrane</keyword>
<keyword id="KW-0564">Palmitate</keyword>
<keyword id="KW-0597">Phosphoprotein</keyword>
<keyword id="KW-1185">Reference proteome</keyword>
<keyword id="KW-0677">Repeat</keyword>
<keyword id="KW-0728">SH3 domain</keyword>
<keyword id="KW-0770">Synapse</keyword>
<reference key="1">
    <citation type="journal article" date="1996" name="Neuron">
        <title>Heteromultimerization and NMDA receptor-clustering activity of Chapsyn-110, a member of the PSD-95 family of proteins.</title>
        <authorList>
            <person name="Kim E."/>
            <person name="Cho K.-O."/>
            <person name="Rothschild A."/>
            <person name="Sheng M."/>
        </authorList>
    </citation>
    <scope>NUCLEOTIDE SEQUENCE [MRNA] (ISOFORM 1)</scope>
</reference>
<reference key="2">
    <citation type="journal article" date="1996" name="Cell">
        <title>Interaction of nitric oxide synthase with the postsynaptic density protein PSD-95 and alpha1-syntrophin mediated by PDZ domains.</title>
        <authorList>
            <person name="Brenman J.E."/>
            <person name="Chao D.S."/>
            <person name="Gee S.H."/>
            <person name="McGee A.W."/>
            <person name="Craven S.E."/>
            <person name="Santillano D.R."/>
            <person name="Wu Z."/>
            <person name="Huang F."/>
            <person name="Xia H."/>
            <person name="Peters M.F."/>
            <person name="Froehner S.C."/>
            <person name="Bredt D.S."/>
        </authorList>
    </citation>
    <scope>NUCLEOTIDE SEQUENCE [MRNA] (ISOFORM 6)</scope>
</reference>
<reference key="3">
    <citation type="submission" date="1996-09" db="EMBL/GenBank/DDBJ databases">
        <authorList>
            <person name="Irie M."/>
            <person name="Hata Y."/>
            <person name="Takai Y."/>
        </authorList>
    </citation>
    <scope>NUCLEOTIDE SEQUENCE [MRNA] (ISOFORM 1)</scope>
</reference>
<reference key="4">
    <citation type="journal article" date="2004" name="J. Biol. Chem.">
        <title>An alternatively spliced isoform of PSD-93/chapsyn 110 binds to the inwardly rectifying potassium channel, Kir2.1.</title>
        <authorList>
            <person name="Leyland M.L."/>
            <person name="Dart C."/>
        </authorList>
    </citation>
    <scope>PARTIAL NUCLEOTIDE SEQUENCE [MRNA] (ISOFORM 4)</scope>
    <scope>TISSUE SPECIFICITY</scope>
</reference>
<reference key="5">
    <citation type="journal article" date="1996" name="J. Neurosci.">
        <title>Cloning and characterization of postsynaptic density 93, a nitric oxide synthase interacting protein.</title>
        <authorList>
            <person name="Brenman J.E."/>
            <person name="Christopherson K.S."/>
            <person name="Craven S.E."/>
            <person name="McGee A.W."/>
            <person name="Bredt D.S."/>
        </authorList>
    </citation>
    <scope>NUCLEOTIDE SEQUENCE [MRNA] (ISOFORMS 1; 2; 3 AND 5)</scope>
    <scope>SUBCELLULAR LOCATION</scope>
    <scope>TISSUE SPECIFICITY</scope>
    <scope>DEVELOPMENTAL STAGE</scope>
    <scope>INTERACTION WITH NOS1</scope>
</reference>
<reference key="6">
    <citation type="journal article" date="2000" name="J. Biol. Chem.">
        <title>Ion channel clustering by membrane-associated guanylate kinases. Differential regulation by N-terminal lipid and metal binding motifs.</title>
        <authorList>
            <person name="El-Husseini A.E."/>
            <person name="Topinka J.R."/>
            <person name="Lehrer-Graiwer J.E."/>
            <person name="Firestein B.L."/>
            <person name="Craven S.E."/>
            <person name="Aoki C."/>
            <person name="Bredt D.S."/>
        </authorList>
    </citation>
    <scope>MUTAGENESIS OF CYS-5 AND CYS-7</scope>
    <scope>PALMITOYLATION AT CYS-5 AND CYS-7</scope>
</reference>
<reference key="7">
    <citation type="journal article" date="2000" name="NeuroReport">
        <title>Postsynaptic targeting of MAGUKs mediated by distinct N-terminal domains.</title>
        <authorList>
            <person name="Firestein B.L."/>
            <person name="Craven S.E."/>
            <person name="Bredt D.S."/>
        </authorList>
    </citation>
    <scope>SUBCELLULAR LOCATION</scope>
</reference>
<reference key="8">
    <citation type="journal article" date="2002" name="Am. J. Physiol.">
        <title>Inward rectifier K+ channel Kir2.3 is localized at the postsynaptic membrane of excitatory synapses.</title>
        <authorList>
            <person name="Inanobe A."/>
            <person name="Fujita A."/>
            <person name="Ito M."/>
            <person name="Tomoike H."/>
            <person name="Inageda K."/>
            <person name="Kurachi Y."/>
        </authorList>
    </citation>
    <scope>INTERACTION WITH KCNJ4</scope>
    <scope>SUBCELLULAR LOCATION</scope>
</reference>
<reference key="9">
    <citation type="journal article" date="2006" name="Neuron">
        <title>SALM synaptic cell adhesion-like molecules regulate the differentiation of excitatory synapses.</title>
        <authorList>
            <person name="Ko J."/>
            <person name="Kim S."/>
            <person name="Chung H.S."/>
            <person name="Kim K."/>
            <person name="Han K."/>
            <person name="Kim H."/>
            <person name="Jun H."/>
            <person name="Kaang B.-K."/>
            <person name="Kim E."/>
        </authorList>
    </citation>
    <scope>INTERACTION WITH LRFN1</scope>
</reference>
<reference key="10">
    <citation type="journal article" date="2008" name="J. Neurosci.">
        <title>Preso, a novel PSD-95-interacting FERM and PDZ domain protein that regulates dendritic spine morphogenesis.</title>
        <authorList>
            <person name="Lee H.W."/>
            <person name="Choi J."/>
            <person name="Shin H."/>
            <person name="Kim K."/>
            <person name="Yang J."/>
            <person name="Na M."/>
            <person name="Choi S.Y."/>
            <person name="Kang G.B."/>
            <person name="Eom S.H."/>
            <person name="Kim H."/>
            <person name="Kim E."/>
        </authorList>
    </citation>
    <scope>INTERACTION WITH FRMPD4</scope>
</reference>
<reference key="11">
    <citation type="journal article" date="2010" name="J. Neurosci.">
        <title>ADAM22, a Kv1 channel-interacting protein, recruits membrane-associated guanylate kinases to juxtaparanodes of myelinated axons.</title>
        <authorList>
            <person name="Ogawa Y."/>
            <person name="Oses-Prieto J."/>
            <person name="Kim M.Y."/>
            <person name="Horresh I."/>
            <person name="Peles E."/>
            <person name="Burlingame A.L."/>
            <person name="Trimmer J.S."/>
            <person name="Meijer D."/>
            <person name="Rasband M.N."/>
        </authorList>
    </citation>
    <scope>INTERACTION WITH ADAM22</scope>
    <scope>SUBCELLULAR LOCATION</scope>
    <scope>IDENTIFICATION BY MASS SPECTROMETRY</scope>
    <scope>TISSUE SPECIFICITY</scope>
</reference>
<reference key="12">
    <citation type="journal article" date="2011" name="EMBO J.">
        <title>DGKiota regulates presynaptic release during mGluR-dependent LTD.</title>
        <authorList>
            <person name="Yang J."/>
            <person name="Seo J."/>
            <person name="Nair R."/>
            <person name="Han S."/>
            <person name="Jang S."/>
            <person name="Kim K."/>
            <person name="Han K."/>
            <person name="Paik S.K."/>
            <person name="Choi J."/>
            <person name="Lee S."/>
            <person name="Bae Y.C."/>
            <person name="Topham M.K."/>
            <person name="Prescott S.M."/>
            <person name="Rhee J.S."/>
            <person name="Choi S.Y."/>
            <person name="Kim E."/>
        </authorList>
    </citation>
    <scope>INTERACTION WITH DGKI</scope>
</reference>
<reference key="13">
    <citation type="journal article" date="2012" name="Nat. Commun.">
        <title>Quantitative maps of protein phosphorylation sites across 14 different rat organs and tissues.</title>
        <authorList>
            <person name="Lundby A."/>
            <person name="Secher A."/>
            <person name="Lage K."/>
            <person name="Nordsborg N.B."/>
            <person name="Dmytriyev A."/>
            <person name="Lundby C."/>
            <person name="Olsen J.V."/>
        </authorList>
    </citation>
    <scope>PHOSPHORYLATION [LARGE SCALE ANALYSIS] AT SER-360; SER-365; SER-406; SER-414; SER-528 AND SER-530</scope>
    <scope>IDENTIFICATION BY MASS SPECTROMETRY [LARGE SCALE ANALYSIS]</scope>
</reference>
<sequence length="852" mass="94934">MFFACYCALRTNVKKYRYQDEDGPHDHSLPRLTHEVRGPELVHVSEKNLSQIENVHGYVLQSHISPLKASPAPIIVNTDTLDTIPYVNGTEIEYEFEEITLERGNSGLGFSIAGGTDNPHIGDDPGIFITKIIPGGAAAEDGRLRVNDCILRVNEVDVSEVSHSKAVEALKEAGSIVRLYVRRRRPILETVVEIKLFKGPKGLGFSIAGGVGNQHIPGDNSIYVTKIIDGGAAQKDGRLQVGDRLLMVNNYSLEEVTHEEAVAILKNTSDVVYLKVGKPTTIYMTDPYGPPDITHSYSPPMENHLLSGNNGTLEYKTSLPPISPGRYSPIPKHMLVEDDYTRPPEPVYSTVNKLCDKPASPRHYSPVECDKSFLLSTPYPHYHLGLLPDSDMTSHSQHSTATRQPSVTLQRAISLEGEPRKVVLHKGSTGLGFNIVGGEDGEGIFVSFILAGGPADLSGELQRGDQILSVNGIDLRGASHEQAAAALKGAGQTVTIIAQYQPEDYARFEAKIHDLREQMMNHSMSSGSGSLRTNQKRSLYVRAMFDYDKSKDSGLPSQGLSFKYGDILHVINASDDEWWQARRVILDGDSEEMGVIPSKRRVERKERARLKTVKFNAKPGVIDSKGDIPGLGDDGYGTKTLRGQEDLILSYEPVTRQEINYTRPVIILGPMKDRINDDLISEFPDKFGSCVPHTTRPKRDYEVDGRDYHFVISREQMEKDIQEHKFIEAGQYNDNLYGTSVQSVRFVAERGKHCILDVSGNAIKRLQVAQLYPIAIFIKPKSLEPLMEMNKRLTEEQAKKTYDRAIKLEQEFGEYFTAIVQGDTLEDIYNQCKLVIEEQSGPFIWIPSKEKL</sequence>
<protein>
    <recommendedName>
        <fullName>Disks large homolog 2</fullName>
    </recommendedName>
    <alternativeName>
        <fullName>Channel-associated protein of synapse-110</fullName>
        <shortName evidence="16">Chapsyn-110</shortName>
    </alternativeName>
    <alternativeName>
        <fullName>Postsynaptic density protein PSD-93</fullName>
    </alternativeName>
</protein>